<sequence>MAFTSPLSTWSLGQQFGLALVISALALVSVIIYGCFLHPLRHIPGPFLAKFSPLWIMRALHRMRFNSELQALHQQYGNVVRIGPNEVSFASLEAETAIYAKQEDGRFSKAGTFLTLFSDLVLNAPTLITIPDPILHRKLHKVIQQAFTPQALARQEPIQKLHIDMAMSELEELAKSGGTVDIADTLETMFWEIIGDLAFGEPLMSGKRPTYESLKQLGKSTMPMVEALSFFLTLPGIASVFGIARSLITALPFPSQLSKLVPSSKLRDCAERQDGREDFLTAIMGSEKQDLVLDADAFFSNAMGLTLAGYQTTATTLAATFYHILRYPEAYNRVCFEIRSTFVSDEEITGARLGRLPFLNACIRETLRLLPPANGKTAQRTASSCTIDGVHIPAGTTVSADLYTIQRSPKYFADPAAFRPERWLDVAEDSEFKRDNRAAYRPFLIGSRACIGREMAQQSIRLIFGNLLWKYDFQQLDQDGFVWERDAGSSLIYTDYKVMVHVMKASGRS</sequence>
<gene>
    <name evidence="6" type="primary">FUP2</name>
    <name type="ORF">FPRO_05645</name>
</gene>
<reference key="1">
    <citation type="journal article" date="2016" name="Genome Biol. Evol.">
        <title>Comparative 'omics' of the Fusarium fujikuroi species complex highlights differences in genetic potential and metabolite synthesis.</title>
        <authorList>
            <person name="Niehaus E.-M."/>
            <person name="Muensterkoetter M."/>
            <person name="Proctor R.H."/>
            <person name="Brown D.W."/>
            <person name="Sharon A."/>
            <person name="Idan Y."/>
            <person name="Oren-Young L."/>
            <person name="Sieber C.M."/>
            <person name="Novak O."/>
            <person name="Pencik A."/>
            <person name="Tarkowska D."/>
            <person name="Hromadova K."/>
            <person name="Freeman S."/>
            <person name="Maymon M."/>
            <person name="Elazar M."/>
            <person name="Youssef S.A."/>
            <person name="El-Shabrawy E.S.M."/>
            <person name="Shalaby A.B.A."/>
            <person name="Houterman P."/>
            <person name="Brock N.L."/>
            <person name="Burkhardt I."/>
            <person name="Tsavkelova E.A."/>
            <person name="Dickschat J.S."/>
            <person name="Galuszka P."/>
            <person name="Gueldener U."/>
            <person name="Tudzynski B."/>
        </authorList>
    </citation>
    <scope>NUCLEOTIDE SEQUENCE [LARGE SCALE GENOMIC DNA]</scope>
    <source>
        <strain>ET1</strain>
    </source>
</reference>
<reference key="2">
    <citation type="journal article" date="2018" name="Molecules">
        <title>Fusaproliferin, a fungal mycotoxin, shows cytotoxicity against pancreatic cancer cell lines.</title>
        <authorList>
            <person name="Hoque N."/>
            <person name="Hasan C.M."/>
            <person name="Rana M.S."/>
            <person name="Varsha A."/>
            <person name="Sohrab M.H."/>
            <person name="Rahman K.M."/>
        </authorList>
    </citation>
    <scope>BIOTECHNOLOGY</scope>
</reference>
<reference key="3">
    <citation type="journal article" date="2021" name="Toxins">
        <title>Identification and functional characterization of the gene cluster responsible for fusaproliferin biosynthesis in Fusarium proliferatum.</title>
        <authorList>
            <person name="Ceranic A."/>
            <person name="Svoboda T."/>
            <person name="Berthiller F."/>
            <person name="Sulyok M."/>
            <person name="Samson J.M."/>
            <person name="Gueldener U."/>
            <person name="Schuhmacher R."/>
            <person name="Adam G."/>
        </authorList>
    </citation>
    <scope>FUNCTION</scope>
    <scope>CATALYTIC ACTIVITY</scope>
    <scope>PATHWAY</scope>
</reference>
<reference key="4">
    <citation type="journal article" date="2022" name="Front. Pharmacol.">
        <title>Investigation of the anti-inflammatory activity of fusaproliferin analogues guided by transcriptome analysis.</title>
        <authorList>
            <person name="Kuang Q.X."/>
            <person name="Lei L.R."/>
            <person name="Li Q.Z."/>
            <person name="Peng W."/>
            <person name="Wang Y.M."/>
            <person name="Dai Y.F."/>
            <person name="Wang D."/>
            <person name="Gu Y.C."/>
            <person name="Deng Y."/>
            <person name="Guo D.L."/>
        </authorList>
    </citation>
    <scope>BIOTECHNOLOGY</scope>
</reference>
<organism>
    <name type="scientific">Fusarium proliferatum (strain ET1)</name>
    <name type="common">Orchid endophyte fungus</name>
    <dbReference type="NCBI Taxonomy" id="1227346"/>
    <lineage>
        <taxon>Eukaryota</taxon>
        <taxon>Fungi</taxon>
        <taxon>Dikarya</taxon>
        <taxon>Ascomycota</taxon>
        <taxon>Pezizomycotina</taxon>
        <taxon>Sordariomycetes</taxon>
        <taxon>Hypocreomycetidae</taxon>
        <taxon>Hypocreales</taxon>
        <taxon>Nectriaceae</taxon>
        <taxon>Fusarium</taxon>
        <taxon>Fusarium fujikuroi species complex</taxon>
    </lineage>
</organism>
<name>FUP2_FUSPR</name>
<feature type="chain" id="PRO_0000460562" description="Cytochrome P450 monooxygenase FUP2">
    <location>
        <begin position="1"/>
        <end position="509"/>
    </location>
</feature>
<feature type="transmembrane region" description="Helical" evidence="2">
    <location>
        <begin position="16"/>
        <end position="36"/>
    </location>
</feature>
<feature type="transmembrane region" description="Helical" evidence="2">
    <location>
        <begin position="224"/>
        <end position="244"/>
    </location>
</feature>
<feature type="binding site" description="axial binding residue" evidence="1">
    <location>
        <position position="450"/>
    </location>
    <ligand>
        <name>heme</name>
        <dbReference type="ChEBI" id="CHEBI:30413"/>
    </ligand>
    <ligandPart>
        <name>Fe</name>
        <dbReference type="ChEBI" id="CHEBI:18248"/>
    </ligandPart>
</feature>
<proteinExistence type="evidence at protein level"/>
<accession>A0A1L7VEQ8</accession>
<dbReference type="EC" id="1.-.-.-" evidence="4"/>
<dbReference type="EMBL" id="FJOF01000003">
    <property type="protein sequence ID" value="CZR39163.1"/>
    <property type="molecule type" value="Genomic_DNA"/>
</dbReference>
<dbReference type="SMR" id="A0A1L7VEQ8"/>
<dbReference type="VEuPathDB" id="FungiDB:FPRO_05645"/>
<dbReference type="Proteomes" id="UP000183971">
    <property type="component" value="Unassembled WGS sequence"/>
</dbReference>
<dbReference type="GO" id="GO:0016020">
    <property type="term" value="C:membrane"/>
    <property type="evidence" value="ECO:0007669"/>
    <property type="project" value="UniProtKB-SubCell"/>
</dbReference>
<dbReference type="GO" id="GO:0020037">
    <property type="term" value="F:heme binding"/>
    <property type="evidence" value="ECO:0007669"/>
    <property type="project" value="InterPro"/>
</dbReference>
<dbReference type="GO" id="GO:0005506">
    <property type="term" value="F:iron ion binding"/>
    <property type="evidence" value="ECO:0007669"/>
    <property type="project" value="InterPro"/>
</dbReference>
<dbReference type="GO" id="GO:0004497">
    <property type="term" value="F:monooxygenase activity"/>
    <property type="evidence" value="ECO:0007669"/>
    <property type="project" value="UniProtKB-KW"/>
</dbReference>
<dbReference type="GO" id="GO:0016705">
    <property type="term" value="F:oxidoreductase activity, acting on paired donors, with incorporation or reduction of molecular oxygen"/>
    <property type="evidence" value="ECO:0007669"/>
    <property type="project" value="InterPro"/>
</dbReference>
<dbReference type="Gene3D" id="1.10.630.10">
    <property type="entry name" value="Cytochrome P450"/>
    <property type="match status" value="1"/>
</dbReference>
<dbReference type="InterPro" id="IPR001128">
    <property type="entry name" value="Cyt_P450"/>
</dbReference>
<dbReference type="InterPro" id="IPR002401">
    <property type="entry name" value="Cyt_P450_E_grp-I"/>
</dbReference>
<dbReference type="InterPro" id="IPR036396">
    <property type="entry name" value="Cyt_P450_sf"/>
</dbReference>
<dbReference type="InterPro" id="IPR050121">
    <property type="entry name" value="Cytochrome_P450_monoxygenase"/>
</dbReference>
<dbReference type="PANTHER" id="PTHR24305">
    <property type="entry name" value="CYTOCHROME P450"/>
    <property type="match status" value="1"/>
</dbReference>
<dbReference type="PANTHER" id="PTHR24305:SF162">
    <property type="entry name" value="P450, PUTATIVE (EUROFUNG)-RELATED"/>
    <property type="match status" value="1"/>
</dbReference>
<dbReference type="Pfam" id="PF00067">
    <property type="entry name" value="p450"/>
    <property type="match status" value="1"/>
</dbReference>
<dbReference type="PRINTS" id="PR00463">
    <property type="entry name" value="EP450I"/>
</dbReference>
<dbReference type="PRINTS" id="PR00385">
    <property type="entry name" value="P450"/>
</dbReference>
<dbReference type="SUPFAM" id="SSF48264">
    <property type="entry name" value="Cytochrome P450"/>
    <property type="match status" value="1"/>
</dbReference>
<comment type="function">
    <text evidence="4">Cytochrome P450 monooxygenase; part of the gene cluster that mediates the biosynthesis of the mycotoxin fusaproliferin (FUP) that belongs to the class of bicyclic sesterterpenoids (PubMed:34357940). FUP2 introduces a hydroxyl group at the C-24 position resulting in the formation of preterpestacin IIa, which can be further oxidized. The oxidation of the hydroxyl group at C-24 to an aldehyde and further to a carboxylic group takes place via unspecific alcohol and aldehyde dehydrogenases and leads to the shunt products preterpestacin IIc and preterpestacin IIb, respectively (PubMed:34357940). The FUP biosynthetic pathway starts with the enzyme encoded by FUP1 that combines a C-terminal prenyltransferase domain responsible for the synthesis of geranylgeranyl diphosphate with the N-terminal terpene cyclase domain, to yield preterpestacin I. Preterpestacin I is then decorated by oxygenation steps that are catalyzed by two cytochrome P450 monooxygenases. First, FUP2 introduces a hydroxyl group at the C-24 position resulting in the formation of preterpestacin IIa. The second P450 monooxygenase catalyzes the hydroxylation at C-16 and C-17 of preterpestacin IIa, producing preterpestacin III. Subsequently, the FAD-dependent oxidoreductase FUP4 catalyzes the oxidation of the hydroxy group at the C-16 position to a keto group, leading to the formation of (-)-terpestacin, which is the immediate precursor of FUP. The final step in the proposed biosynthetic pathway is the addition of an acetyl group at the C-24 position of terpestacin, which is catalyzed by the acetyltransferase FUP5 (PubMed:34357940).</text>
</comment>
<comment type="cofactor">
    <cofactor evidence="1">
        <name>heme</name>
        <dbReference type="ChEBI" id="CHEBI:30413"/>
    </cofactor>
</comment>
<comment type="pathway">
    <text evidence="4">Secondary metabolite biosynthesis.</text>
</comment>
<comment type="subcellular location">
    <subcellularLocation>
        <location evidence="2">Membrane</location>
        <topology evidence="2">Multi-pass membrane protein</topology>
    </subcellularLocation>
</comment>
<comment type="biotechnology">
    <text evidence="3 5">Fusaproliferin shows cytotoxicity against pancreatic cancer cell lines and provides a new chemical scaffold that can be further developed to obtain more potent synthetic agents against pancreatic cancer (PubMed:30545017). Fusaproliferin and its analogs show also anti-inflammatory activity and can be hit compounds for the treatment of inflammation-associated diseases (PubMed:37124719).</text>
</comment>
<comment type="similarity">
    <text evidence="7">Belongs to the cytochrome P450 family.</text>
</comment>
<keyword id="KW-0349">Heme</keyword>
<keyword id="KW-0408">Iron</keyword>
<keyword id="KW-0472">Membrane</keyword>
<keyword id="KW-0479">Metal-binding</keyword>
<keyword id="KW-0503">Monooxygenase</keyword>
<keyword id="KW-0560">Oxidoreductase</keyword>
<keyword id="KW-0812">Transmembrane</keyword>
<keyword id="KW-1133">Transmembrane helix</keyword>
<protein>
    <recommendedName>
        <fullName evidence="6">Cytochrome P450 monooxygenase FUP2</fullName>
        <ecNumber evidence="4">1.-.-.-</ecNumber>
    </recommendedName>
    <alternativeName>
        <fullName evidence="6">Fusaproliferin biosynthesis cluster protein 2</fullName>
    </alternativeName>
</protein>
<evidence type="ECO:0000250" key="1">
    <source>
        <dbReference type="UniProtKB" id="P04798"/>
    </source>
</evidence>
<evidence type="ECO:0000255" key="2"/>
<evidence type="ECO:0000269" key="3">
    <source>
    </source>
</evidence>
<evidence type="ECO:0000269" key="4">
    <source>
    </source>
</evidence>
<evidence type="ECO:0000269" key="5">
    <source>
    </source>
</evidence>
<evidence type="ECO:0000303" key="6">
    <source>
    </source>
</evidence>
<evidence type="ECO:0000305" key="7"/>